<accession>Q6KH54</accession>
<sequence>MNLYLDIGNTNLKFGYEIENQFHFYTLPTLENYTCDMLSKNLESFIKKQKFNYLIVSSVVPSLNLVIKDFASIHLKSKVMFIDKIKKEILNLNGREHSSIGSDIIANALYVSSRYEDAIVISLGTATVIFHVVSKRLEGAIIAPGVKNSYLSLIQSAKKLSEVILKLPRKNLGGNTQEAISLGILKGNFHLINGFINELDPKGKSKILITGGNYGMLKDVLKDYEYVDNMVILGLKDYYEIFK</sequence>
<feature type="chain" id="PRO_0000267567" description="Type III pantothenate kinase">
    <location>
        <begin position="1"/>
        <end position="243"/>
    </location>
</feature>
<feature type="active site" description="Proton acceptor" evidence="1">
    <location>
        <position position="103"/>
    </location>
</feature>
<feature type="binding site" evidence="1">
    <location>
        <begin position="6"/>
        <end position="13"/>
    </location>
    <ligand>
        <name>ATP</name>
        <dbReference type="ChEBI" id="CHEBI:30616"/>
    </ligand>
</feature>
<feature type="binding site" evidence="1">
    <location>
        <begin position="101"/>
        <end position="104"/>
    </location>
    <ligand>
        <name>substrate</name>
    </ligand>
</feature>
<feature type="binding site" evidence="1">
    <location>
        <position position="125"/>
    </location>
    <ligand>
        <name>ATP</name>
        <dbReference type="ChEBI" id="CHEBI:30616"/>
    </ligand>
</feature>
<feature type="binding site" evidence="1">
    <location>
        <position position="176"/>
    </location>
    <ligand>
        <name>substrate</name>
    </ligand>
</feature>
<protein>
    <recommendedName>
        <fullName evidence="1">Type III pantothenate kinase</fullName>
        <ecNumber evidence="1">2.7.1.33</ecNumber>
    </recommendedName>
    <alternativeName>
        <fullName evidence="1">PanK-III</fullName>
    </alternativeName>
    <alternativeName>
        <fullName evidence="1">Pantothenic acid kinase</fullName>
    </alternativeName>
</protein>
<organism>
    <name type="scientific">Mycoplasma mobile (strain ATCC 43663 / 163K / NCTC 11711)</name>
    <name type="common">Mesomycoplasma mobile</name>
    <dbReference type="NCBI Taxonomy" id="267748"/>
    <lineage>
        <taxon>Bacteria</taxon>
        <taxon>Bacillati</taxon>
        <taxon>Mycoplasmatota</taxon>
        <taxon>Mycoplasmoidales</taxon>
        <taxon>Metamycoplasmataceae</taxon>
        <taxon>Mesomycoplasma</taxon>
    </lineage>
</organism>
<keyword id="KW-0067">ATP-binding</keyword>
<keyword id="KW-0173">Coenzyme A biosynthesis</keyword>
<keyword id="KW-0963">Cytoplasm</keyword>
<keyword id="KW-0418">Kinase</keyword>
<keyword id="KW-0547">Nucleotide-binding</keyword>
<keyword id="KW-0630">Potassium</keyword>
<keyword id="KW-1185">Reference proteome</keyword>
<keyword id="KW-0808">Transferase</keyword>
<name>COAX_MYCM1</name>
<evidence type="ECO:0000255" key="1">
    <source>
        <dbReference type="HAMAP-Rule" id="MF_01274"/>
    </source>
</evidence>
<reference key="1">
    <citation type="journal article" date="2004" name="Genome Res.">
        <title>The complete genome and proteome of Mycoplasma mobile.</title>
        <authorList>
            <person name="Jaffe J.D."/>
            <person name="Stange-Thomann N."/>
            <person name="Smith C."/>
            <person name="DeCaprio D."/>
            <person name="Fisher S."/>
            <person name="Butler J."/>
            <person name="Calvo S."/>
            <person name="Elkins T."/>
            <person name="FitzGerald M.G."/>
            <person name="Hafez N."/>
            <person name="Kodira C.D."/>
            <person name="Major J."/>
            <person name="Wang S."/>
            <person name="Wilkinson J."/>
            <person name="Nicol R."/>
            <person name="Nusbaum C."/>
            <person name="Birren B."/>
            <person name="Berg H.C."/>
            <person name="Church G.M."/>
        </authorList>
    </citation>
    <scope>NUCLEOTIDE SEQUENCE [LARGE SCALE GENOMIC DNA]</scope>
    <source>
        <strain>ATCC 43663 / NCTC 11711 / 163 K</strain>
    </source>
</reference>
<gene>
    <name evidence="1" type="primary">coaX</name>
    <name type="ordered locus">MMOB5910</name>
</gene>
<dbReference type="EC" id="2.7.1.33" evidence="1"/>
<dbReference type="EMBL" id="AE017308">
    <property type="protein sequence ID" value="AAT28077.1"/>
    <property type="molecule type" value="Genomic_DNA"/>
</dbReference>
<dbReference type="RefSeq" id="WP_011265111.1">
    <property type="nucleotide sequence ID" value="NC_006908.1"/>
</dbReference>
<dbReference type="SMR" id="Q6KH54"/>
<dbReference type="STRING" id="267748.MMOB5910"/>
<dbReference type="KEGG" id="mmo:MMOB5910"/>
<dbReference type="eggNOG" id="COG1521">
    <property type="taxonomic scope" value="Bacteria"/>
</dbReference>
<dbReference type="HOGENOM" id="CLU_066627_1_1_14"/>
<dbReference type="OrthoDB" id="9804707at2"/>
<dbReference type="UniPathway" id="UPA00241">
    <property type="reaction ID" value="UER00352"/>
</dbReference>
<dbReference type="Proteomes" id="UP000009072">
    <property type="component" value="Chromosome"/>
</dbReference>
<dbReference type="GO" id="GO:0005737">
    <property type="term" value="C:cytoplasm"/>
    <property type="evidence" value="ECO:0007669"/>
    <property type="project" value="UniProtKB-SubCell"/>
</dbReference>
<dbReference type="GO" id="GO:0005524">
    <property type="term" value="F:ATP binding"/>
    <property type="evidence" value="ECO:0007669"/>
    <property type="project" value="UniProtKB-UniRule"/>
</dbReference>
<dbReference type="GO" id="GO:0004594">
    <property type="term" value="F:pantothenate kinase activity"/>
    <property type="evidence" value="ECO:0007669"/>
    <property type="project" value="UniProtKB-UniRule"/>
</dbReference>
<dbReference type="GO" id="GO:0015937">
    <property type="term" value="P:coenzyme A biosynthetic process"/>
    <property type="evidence" value="ECO:0007669"/>
    <property type="project" value="UniProtKB-UniRule"/>
</dbReference>
<dbReference type="CDD" id="cd24015">
    <property type="entry name" value="ASKHA_NBD_PanK-III"/>
    <property type="match status" value="1"/>
</dbReference>
<dbReference type="Gene3D" id="3.30.420.40">
    <property type="match status" value="2"/>
</dbReference>
<dbReference type="HAMAP" id="MF_01274">
    <property type="entry name" value="Pantothen_kinase_3"/>
    <property type="match status" value="1"/>
</dbReference>
<dbReference type="InterPro" id="IPR043129">
    <property type="entry name" value="ATPase_NBD"/>
</dbReference>
<dbReference type="InterPro" id="IPR004619">
    <property type="entry name" value="Type_III_PanK"/>
</dbReference>
<dbReference type="NCBIfam" id="TIGR00671">
    <property type="entry name" value="baf"/>
    <property type="match status" value="1"/>
</dbReference>
<dbReference type="PANTHER" id="PTHR34265">
    <property type="entry name" value="TYPE III PANTOTHENATE KINASE"/>
    <property type="match status" value="1"/>
</dbReference>
<dbReference type="PANTHER" id="PTHR34265:SF1">
    <property type="entry name" value="TYPE III PANTOTHENATE KINASE"/>
    <property type="match status" value="1"/>
</dbReference>
<dbReference type="Pfam" id="PF03309">
    <property type="entry name" value="Pan_kinase"/>
    <property type="match status" value="1"/>
</dbReference>
<dbReference type="SUPFAM" id="SSF53067">
    <property type="entry name" value="Actin-like ATPase domain"/>
    <property type="match status" value="2"/>
</dbReference>
<comment type="function">
    <text evidence="1">Catalyzes the phosphorylation of pantothenate (Pan), the first step in CoA biosynthesis.</text>
</comment>
<comment type="catalytic activity">
    <reaction evidence="1">
        <text>(R)-pantothenate + ATP = (R)-4'-phosphopantothenate + ADP + H(+)</text>
        <dbReference type="Rhea" id="RHEA:16373"/>
        <dbReference type="ChEBI" id="CHEBI:10986"/>
        <dbReference type="ChEBI" id="CHEBI:15378"/>
        <dbReference type="ChEBI" id="CHEBI:29032"/>
        <dbReference type="ChEBI" id="CHEBI:30616"/>
        <dbReference type="ChEBI" id="CHEBI:456216"/>
        <dbReference type="EC" id="2.7.1.33"/>
    </reaction>
</comment>
<comment type="cofactor">
    <cofactor evidence="1">
        <name>NH4(+)</name>
        <dbReference type="ChEBI" id="CHEBI:28938"/>
    </cofactor>
    <cofactor evidence="1">
        <name>K(+)</name>
        <dbReference type="ChEBI" id="CHEBI:29103"/>
    </cofactor>
    <text evidence="1">A monovalent cation. Ammonium or potassium.</text>
</comment>
<comment type="pathway">
    <text evidence="1">Cofactor biosynthesis; coenzyme A biosynthesis; CoA from (R)-pantothenate: step 1/5.</text>
</comment>
<comment type="subunit">
    <text evidence="1">Homodimer.</text>
</comment>
<comment type="subcellular location">
    <subcellularLocation>
        <location evidence="1">Cytoplasm</location>
    </subcellularLocation>
</comment>
<comment type="similarity">
    <text evidence="1">Belongs to the type III pantothenate kinase family.</text>
</comment>
<proteinExistence type="inferred from homology"/>